<feature type="chain" id="PRO_0000060070" description="Maltose/maltodextrin transport system permease protein MalF">
    <location>
        <begin position="1"/>
        <end position="519"/>
    </location>
</feature>
<feature type="topological domain" description="Cytoplasmic" evidence="2">
    <location>
        <begin position="1"/>
        <end position="18"/>
    </location>
</feature>
<feature type="transmembrane region" description="Helical" evidence="3">
    <location>
        <begin position="19"/>
        <end position="41"/>
    </location>
</feature>
<feature type="topological domain" description="Periplasmic" evidence="2">
    <location>
        <begin position="42"/>
        <end position="44"/>
    </location>
</feature>
<feature type="transmembrane region" description="Helical" evidence="3">
    <location>
        <begin position="45"/>
        <end position="62"/>
    </location>
</feature>
<feature type="topological domain" description="Cytoplasmic" evidence="2">
    <location>
        <begin position="63"/>
        <end position="74"/>
    </location>
</feature>
<feature type="transmembrane region" description="Helical" evidence="3">
    <location>
        <begin position="75"/>
        <end position="97"/>
    </location>
</feature>
<feature type="topological domain" description="Periplasmic" evidence="2">
    <location>
        <begin position="98"/>
        <end position="288"/>
    </location>
</feature>
<feature type="transmembrane region" description="Helical" evidence="3">
    <location>
        <begin position="289"/>
        <end position="311"/>
    </location>
</feature>
<feature type="topological domain" description="Cytoplasmic" evidence="2">
    <location>
        <begin position="312"/>
        <end position="323"/>
    </location>
</feature>
<feature type="transmembrane region" description="Helical" evidence="3">
    <location>
        <begin position="324"/>
        <end position="346"/>
    </location>
</feature>
<feature type="topological domain" description="Periplasmic" evidence="2">
    <location>
        <begin position="347"/>
        <end position="374"/>
    </location>
</feature>
<feature type="transmembrane region" description="Helical" evidence="3">
    <location>
        <begin position="375"/>
        <end position="397"/>
    </location>
</feature>
<feature type="topological domain" description="Cytoplasmic" evidence="2">
    <location>
        <begin position="398"/>
        <end position="417"/>
    </location>
</feature>
<feature type="transmembrane region" description="Helical" evidence="3">
    <location>
        <begin position="418"/>
        <end position="440"/>
    </location>
</feature>
<feature type="topological domain" description="Periplasmic" evidence="2">
    <location>
        <begin position="441"/>
        <end position="488"/>
    </location>
</feature>
<feature type="transmembrane region" description="Helical" evidence="3">
    <location>
        <begin position="489"/>
        <end position="511"/>
    </location>
</feature>
<feature type="topological domain" description="Cytoplasmic" evidence="2">
    <location>
        <begin position="512"/>
        <end position="519"/>
    </location>
</feature>
<feature type="domain" description="ABC transmembrane type-1" evidence="3">
    <location>
        <begin position="286"/>
        <end position="510"/>
    </location>
</feature>
<sequence>MRKNPMDVIKKKHWWQSDALKWSVLGLLGLLVGYLVVLMYAQGEYLFAITTLILSSAGLYIFANRKAYAWRYVYPGMAGMGLFVLFPLVCTIAIAFTNYSSTNQLTFERAQEVLLDRSWQAGKIYNFGLYPAGDEWQLALSDGETGKNYLSDAFKFGGEQKLQLKESATQPEGERANLRVITQNRQALSDITAILPDGNKVMMSSLRQFSGTQPLYTLDGDGTLTNNQSGVKYRPNNQIGFYQSITADGNWGDEKLSPGYTVTTGWKNFTRVFTDEGIQKPFLAIFVWTVVFSLITVFLTVAVGMVLACLVQWEALRGKAVYRVLLILPYAVPSFISILIFKGLFNQSFGEINMMLSALFGVKPAWFSDPTTARTMLIIVNTWLGYPYMMILCMGLLKAIPDDLYEASAMDGAGPFQNFFKITLPLLIKPLTPLMIASFAFNFNNFVLIQLLTNGGPDRLGTTTPAGYTDLLVNYTYRIAFEGGGGQDFGLAAAIATLIFLLVGALAIVNLKATRMKFD</sequence>
<reference key="1">
    <citation type="journal article" date="2002" name="Proc. Natl. Acad. Sci. U.S.A.">
        <title>Extensive mosaic structure revealed by the complete genome sequence of uropathogenic Escherichia coli.</title>
        <authorList>
            <person name="Welch R.A."/>
            <person name="Burland V."/>
            <person name="Plunkett G. III"/>
            <person name="Redford P."/>
            <person name="Roesch P."/>
            <person name="Rasko D."/>
            <person name="Buckles E.L."/>
            <person name="Liou S.-R."/>
            <person name="Boutin A."/>
            <person name="Hackett J."/>
            <person name="Stroud D."/>
            <person name="Mayhew G.F."/>
            <person name="Rose D.J."/>
            <person name="Zhou S."/>
            <person name="Schwartz D.C."/>
            <person name="Perna N.T."/>
            <person name="Mobley H.L.T."/>
            <person name="Donnenberg M.S."/>
            <person name="Blattner F.R."/>
        </authorList>
    </citation>
    <scope>NUCLEOTIDE SEQUENCE [LARGE SCALE GENOMIC DNA]</scope>
    <source>
        <strain>CFT073 / ATCC 700928 / UPEC</strain>
    </source>
</reference>
<gene>
    <name type="primary">malF</name>
    <name type="ordered locus">c5003</name>
</gene>
<comment type="function">
    <text evidence="1">Part of the ABC transporter complex MalEFGK involved in maltose/maltodextrin import. Probably responsible for the translocation of the substrate across the membrane.</text>
</comment>
<comment type="subunit">
    <text evidence="1">The complex is composed of two ATP-binding proteins (MalK), two transmembrane proteins (MalG and MalF) and a solute-binding protein (MalE).</text>
</comment>
<comment type="subcellular location">
    <subcellularLocation>
        <location evidence="1">Cell inner membrane</location>
        <topology evidence="1">Multi-pass membrane protein</topology>
    </subcellularLocation>
</comment>
<comment type="similarity">
    <text evidence="4">Belongs to the binding-protein-dependent transport system permease family. MalFG subfamily.</text>
</comment>
<name>MALF_ECOL6</name>
<dbReference type="EMBL" id="AE014075">
    <property type="protein sequence ID" value="AAN83429.1"/>
    <property type="molecule type" value="Genomic_DNA"/>
</dbReference>
<dbReference type="BMRB" id="Q8FB38"/>
<dbReference type="SMR" id="Q8FB38"/>
<dbReference type="STRING" id="199310.c5003"/>
<dbReference type="KEGG" id="ecc:c5003"/>
<dbReference type="eggNOG" id="COG1175">
    <property type="taxonomic scope" value="Bacteria"/>
</dbReference>
<dbReference type="HOGENOM" id="CLU_016047_20_0_6"/>
<dbReference type="BioCyc" id="ECOL199310:C5003-MONOMER"/>
<dbReference type="Proteomes" id="UP000001410">
    <property type="component" value="Chromosome"/>
</dbReference>
<dbReference type="GO" id="GO:1990060">
    <property type="term" value="C:maltose transport complex"/>
    <property type="evidence" value="ECO:0007669"/>
    <property type="project" value="TreeGrafter"/>
</dbReference>
<dbReference type="GO" id="GO:0015423">
    <property type="term" value="F:ABC-type maltose transporter activity"/>
    <property type="evidence" value="ECO:0007669"/>
    <property type="project" value="TreeGrafter"/>
</dbReference>
<dbReference type="GO" id="GO:0042956">
    <property type="term" value="P:maltodextrin transmembrane transport"/>
    <property type="evidence" value="ECO:0007669"/>
    <property type="project" value="TreeGrafter"/>
</dbReference>
<dbReference type="CDD" id="cd06261">
    <property type="entry name" value="TM_PBP2"/>
    <property type="match status" value="1"/>
</dbReference>
<dbReference type="FunFam" id="1.10.3720.10:FF:000030">
    <property type="entry name" value="Maltose ABC transporter permease MalF"/>
    <property type="match status" value="1"/>
</dbReference>
<dbReference type="FunFam" id="1.20.58.370:FF:000001">
    <property type="entry name" value="Maltose ABC transporter permease MalF"/>
    <property type="match status" value="1"/>
</dbReference>
<dbReference type="FunFam" id="2.40.430.10:FF:000001">
    <property type="entry name" value="Maltose ABC transporter permease MalF"/>
    <property type="match status" value="1"/>
</dbReference>
<dbReference type="Gene3D" id="2.40.430.10">
    <property type="entry name" value="D-maltodextrin-binding protein, MBP"/>
    <property type="match status" value="1"/>
</dbReference>
<dbReference type="Gene3D" id="1.20.58.370">
    <property type="entry name" value="MalF N-terminal region-like"/>
    <property type="match status" value="1"/>
</dbReference>
<dbReference type="Gene3D" id="3.10.650.10">
    <property type="entry name" value="MalF N-terminal region-like"/>
    <property type="match status" value="1"/>
</dbReference>
<dbReference type="Gene3D" id="1.10.3720.10">
    <property type="entry name" value="MetI-like"/>
    <property type="match status" value="1"/>
</dbReference>
<dbReference type="InterPro" id="IPR035277">
    <property type="entry name" value="MalF_N"/>
</dbReference>
<dbReference type="InterPro" id="IPR048464">
    <property type="entry name" value="MalF_N_TM"/>
</dbReference>
<dbReference type="InterPro" id="IPR029345">
    <property type="entry name" value="MalF_P2"/>
</dbReference>
<dbReference type="InterPro" id="IPR047103">
    <property type="entry name" value="MalF_P2_sf"/>
</dbReference>
<dbReference type="InterPro" id="IPR000515">
    <property type="entry name" value="MetI-like"/>
</dbReference>
<dbReference type="InterPro" id="IPR035906">
    <property type="entry name" value="MetI-like_sf"/>
</dbReference>
<dbReference type="NCBIfam" id="NF008232">
    <property type="entry name" value="PRK10999.1"/>
    <property type="match status" value="1"/>
</dbReference>
<dbReference type="PANTHER" id="PTHR47314">
    <property type="entry name" value="MALTOSE/MALTODEXTRIN TRANSPORT SYSTEM PERMEASE PROTEIN MALF"/>
    <property type="match status" value="1"/>
</dbReference>
<dbReference type="PANTHER" id="PTHR47314:SF1">
    <property type="entry name" value="MALTOSE_MALTODEXTRIN TRANSPORT SYSTEM PERMEASE PROTEIN MALF"/>
    <property type="match status" value="1"/>
</dbReference>
<dbReference type="Pfam" id="PF00528">
    <property type="entry name" value="BPD_transp_1"/>
    <property type="match status" value="1"/>
</dbReference>
<dbReference type="Pfam" id="PF20872">
    <property type="entry name" value="MalF_N_TM"/>
    <property type="match status" value="1"/>
</dbReference>
<dbReference type="Pfam" id="PF14785">
    <property type="entry name" value="MalF_P2"/>
    <property type="match status" value="1"/>
</dbReference>
<dbReference type="SUPFAM" id="SSF160964">
    <property type="entry name" value="MalF N-terminal region-like"/>
    <property type="match status" value="1"/>
</dbReference>
<dbReference type="SUPFAM" id="SSF161098">
    <property type="entry name" value="MetI-like"/>
    <property type="match status" value="1"/>
</dbReference>
<dbReference type="PROSITE" id="PS50928">
    <property type="entry name" value="ABC_TM1"/>
    <property type="match status" value="1"/>
</dbReference>
<evidence type="ECO:0000250" key="1">
    <source>
        <dbReference type="UniProtKB" id="P02916"/>
    </source>
</evidence>
<evidence type="ECO:0000255" key="2"/>
<evidence type="ECO:0000255" key="3">
    <source>
        <dbReference type="PROSITE-ProRule" id="PRU00441"/>
    </source>
</evidence>
<evidence type="ECO:0000305" key="4"/>
<protein>
    <recommendedName>
        <fullName evidence="1">Maltose/maltodextrin transport system permease protein MalF</fullName>
    </recommendedName>
</protein>
<accession>Q8FB38</accession>
<keyword id="KW-0997">Cell inner membrane</keyword>
<keyword id="KW-1003">Cell membrane</keyword>
<keyword id="KW-0472">Membrane</keyword>
<keyword id="KW-1185">Reference proteome</keyword>
<keyword id="KW-0762">Sugar transport</keyword>
<keyword id="KW-0812">Transmembrane</keyword>
<keyword id="KW-1133">Transmembrane helix</keyword>
<keyword id="KW-0813">Transport</keyword>
<proteinExistence type="inferred from homology"/>
<organism>
    <name type="scientific">Escherichia coli O6:H1 (strain CFT073 / ATCC 700928 / UPEC)</name>
    <dbReference type="NCBI Taxonomy" id="199310"/>
    <lineage>
        <taxon>Bacteria</taxon>
        <taxon>Pseudomonadati</taxon>
        <taxon>Pseudomonadota</taxon>
        <taxon>Gammaproteobacteria</taxon>
        <taxon>Enterobacterales</taxon>
        <taxon>Enterobacteriaceae</taxon>
        <taxon>Escherichia</taxon>
    </lineage>
</organism>